<protein>
    <recommendedName>
        <fullName evidence="1">UPF0246 protein YE0603</fullName>
    </recommendedName>
</protein>
<accession>A1JJC9</accession>
<name>Y603_YERE8</name>
<sequence>MLIVISPAKTLDYQSPLATKKFTQPEMLDKSQQLIEICRELTPAQISSLMGISDKLAGLNAARFSEWQPDFTPDNARQAILAFKGDVYTGMQAQDFSAADFDFAQQHLRMLSGLYGVLRPLDLMQPYRLEMGIKLANPGGKDLYSFWGDQITEKLNQALEQQGDNVLINLASDEYFKAVKPAKLAGSLIKPVFLDEKNGKYKIISFYAKKARGLMSRFIIQNKLTKPEQLVDFNLEGYEFDAGLSAKNELVFKRAEQF</sequence>
<feature type="chain" id="PRO_1000061645" description="UPF0246 protein YE0603">
    <location>
        <begin position="1"/>
        <end position="258"/>
    </location>
</feature>
<proteinExistence type="inferred from homology"/>
<reference key="1">
    <citation type="journal article" date="2006" name="PLoS Genet.">
        <title>The complete genome sequence and comparative genome analysis of the high pathogenicity Yersinia enterocolitica strain 8081.</title>
        <authorList>
            <person name="Thomson N.R."/>
            <person name="Howard S."/>
            <person name="Wren B.W."/>
            <person name="Holden M.T.G."/>
            <person name="Crossman L."/>
            <person name="Challis G.L."/>
            <person name="Churcher C."/>
            <person name="Mungall K."/>
            <person name="Brooks K."/>
            <person name="Chillingworth T."/>
            <person name="Feltwell T."/>
            <person name="Abdellah Z."/>
            <person name="Hauser H."/>
            <person name="Jagels K."/>
            <person name="Maddison M."/>
            <person name="Moule S."/>
            <person name="Sanders M."/>
            <person name="Whitehead S."/>
            <person name="Quail M.A."/>
            <person name="Dougan G."/>
            <person name="Parkhill J."/>
            <person name="Prentice M.B."/>
        </authorList>
    </citation>
    <scope>NUCLEOTIDE SEQUENCE [LARGE SCALE GENOMIC DNA]</scope>
    <source>
        <strain>NCTC 13174 / 8081</strain>
    </source>
</reference>
<comment type="similarity">
    <text evidence="1">Belongs to the UPF0246 family.</text>
</comment>
<dbReference type="EMBL" id="AM286415">
    <property type="protein sequence ID" value="CAL10717.1"/>
    <property type="molecule type" value="Genomic_DNA"/>
</dbReference>
<dbReference type="RefSeq" id="WP_011815534.1">
    <property type="nucleotide sequence ID" value="NC_008800.1"/>
</dbReference>
<dbReference type="RefSeq" id="YP_001004957.1">
    <property type="nucleotide sequence ID" value="NC_008800.1"/>
</dbReference>
<dbReference type="SMR" id="A1JJC9"/>
<dbReference type="KEGG" id="yen:YE0603"/>
<dbReference type="PATRIC" id="fig|393305.7.peg.697"/>
<dbReference type="eggNOG" id="COG3022">
    <property type="taxonomic scope" value="Bacteria"/>
</dbReference>
<dbReference type="HOGENOM" id="CLU_061989_0_0_6"/>
<dbReference type="OrthoDB" id="9777133at2"/>
<dbReference type="Proteomes" id="UP000000642">
    <property type="component" value="Chromosome"/>
</dbReference>
<dbReference type="GO" id="GO:0005829">
    <property type="term" value="C:cytosol"/>
    <property type="evidence" value="ECO:0007669"/>
    <property type="project" value="TreeGrafter"/>
</dbReference>
<dbReference type="GO" id="GO:0033194">
    <property type="term" value="P:response to hydroperoxide"/>
    <property type="evidence" value="ECO:0007669"/>
    <property type="project" value="TreeGrafter"/>
</dbReference>
<dbReference type="HAMAP" id="MF_00652">
    <property type="entry name" value="UPF0246"/>
    <property type="match status" value="1"/>
</dbReference>
<dbReference type="InterPro" id="IPR005583">
    <property type="entry name" value="YaaA"/>
</dbReference>
<dbReference type="NCBIfam" id="NF002541">
    <property type="entry name" value="PRK02101.1-1"/>
    <property type="match status" value="1"/>
</dbReference>
<dbReference type="NCBIfam" id="NF002542">
    <property type="entry name" value="PRK02101.1-3"/>
    <property type="match status" value="1"/>
</dbReference>
<dbReference type="PANTHER" id="PTHR30283:SF4">
    <property type="entry name" value="PEROXIDE STRESS RESISTANCE PROTEIN YAAA"/>
    <property type="match status" value="1"/>
</dbReference>
<dbReference type="PANTHER" id="PTHR30283">
    <property type="entry name" value="PEROXIDE STRESS RESPONSE PROTEIN YAAA"/>
    <property type="match status" value="1"/>
</dbReference>
<dbReference type="Pfam" id="PF03883">
    <property type="entry name" value="H2O2_YaaD"/>
    <property type="match status" value="1"/>
</dbReference>
<organism>
    <name type="scientific">Yersinia enterocolitica serotype O:8 / biotype 1B (strain NCTC 13174 / 8081)</name>
    <dbReference type="NCBI Taxonomy" id="393305"/>
    <lineage>
        <taxon>Bacteria</taxon>
        <taxon>Pseudomonadati</taxon>
        <taxon>Pseudomonadota</taxon>
        <taxon>Gammaproteobacteria</taxon>
        <taxon>Enterobacterales</taxon>
        <taxon>Yersiniaceae</taxon>
        <taxon>Yersinia</taxon>
    </lineage>
</organism>
<evidence type="ECO:0000255" key="1">
    <source>
        <dbReference type="HAMAP-Rule" id="MF_00652"/>
    </source>
</evidence>
<gene>
    <name type="ordered locus">YE0603</name>
</gene>